<gene>
    <name type="primary">Edf1</name>
</gene>
<evidence type="ECO:0000250" key="1"/>
<evidence type="ECO:0000250" key="2">
    <source>
        <dbReference type="UniProtKB" id="O60869"/>
    </source>
</evidence>
<evidence type="ECO:0000255" key="3">
    <source>
        <dbReference type="PROSITE-ProRule" id="PRU00257"/>
    </source>
</evidence>
<evidence type="ECO:0000256" key="4">
    <source>
        <dbReference type="SAM" id="MobiDB-lite"/>
    </source>
</evidence>
<evidence type="ECO:0000269" key="5">
    <source>
    </source>
</evidence>
<evidence type="ECO:0000305" key="6"/>
<comment type="function">
    <text evidence="1">Transcriptional coactivator stimulating NR5A1 and ligand-dependent NR1H3/LXRA and PPARG transcriptional activities. Enhances the DNA-binding activity of ATF1, ATF2, CREB1 and NR5A1. Regulates nitric oxid synthase activity probably by sequestering calmodulin in the cytoplasm. Might function in endothelial cells differentiation, hormone-induced cardiomyocytes hypertrophy and lipid metabolism (By similarity).</text>
</comment>
<comment type="subunit">
    <text evidence="1">Interacts with TBP and the transcription factor IID (TFIID) complex, NR5A2, NR1H3 and PPARG. Interaction with TBP is regulated by phosphorylation. Binds NR5A1, ATF1, FOS and JUN via their conserved basic region. Binding to calmodulin is regulated by calcium and phosphorylation of the IQ motif (By similarity).</text>
</comment>
<comment type="subcellular location">
    <subcellularLocation>
        <location evidence="1">Cytoplasm</location>
    </subcellularLocation>
    <subcellularLocation>
        <location evidence="1">Nucleus</location>
    </subcellularLocation>
    <text evidence="1">Also nuclear upon binding to NR5A1 and treatment of cells with TPA or forskolin.</text>
</comment>
<comment type="tissue specificity">
    <text evidence="5">Expressed in brain, liver, kidney and heart (at protein level). Also expressed in testis.</text>
</comment>
<comment type="developmental stage">
    <text evidence="5">Very highly expressed seven days after implantation, when gastrulation and neurulation occurs. Expression decreases 11 days after implantation, when organogenesis is being completed, and remains rather low up to late developmental stages.</text>
</comment>
<comment type="domain">
    <text evidence="1">The IQ motif, which is involved in calmodulin binding, overlaps with the binding domain for nuclear receptors and transcription factors. Its phosphorylation probably allows a switch between the two activities of the protein (By similarity).</text>
</comment>
<comment type="PTM">
    <text evidence="1">Phosphorylated.</text>
</comment>
<protein>
    <recommendedName>
        <fullName>Endothelial differentiation-related factor 1</fullName>
        <shortName>EDF-1</shortName>
    </recommendedName>
    <alternativeName>
        <fullName>Multiprotein-bridging factor 1</fullName>
        <shortName>MBF1</shortName>
    </alternativeName>
</protein>
<keyword id="KW-0007">Acetylation</keyword>
<keyword id="KW-0010">Activator</keyword>
<keyword id="KW-0112">Calmodulin-binding</keyword>
<keyword id="KW-0963">Cytoplasm</keyword>
<keyword id="KW-0217">Developmental protein</keyword>
<keyword id="KW-0221">Differentiation</keyword>
<keyword id="KW-0238">DNA-binding</keyword>
<keyword id="KW-0488">Methylation</keyword>
<keyword id="KW-0539">Nucleus</keyword>
<keyword id="KW-0597">Phosphoprotein</keyword>
<keyword id="KW-1185">Reference proteome</keyword>
<keyword id="KW-0804">Transcription</keyword>
<keyword id="KW-0805">Transcription regulation</keyword>
<feature type="initiator methionine" description="Removed" evidence="2">
    <location>
        <position position="1"/>
    </location>
</feature>
<feature type="chain" id="PRO_0000149796" description="Endothelial differentiation-related factor 1">
    <location>
        <begin position="2"/>
        <end position="148"/>
    </location>
</feature>
<feature type="domain" description="HTH cro/C1-type" evidence="3">
    <location>
        <begin position="81"/>
        <end position="135"/>
    </location>
</feature>
<feature type="DNA-binding region" description="H-T-H motif" evidence="3">
    <location>
        <begin position="92"/>
        <end position="111"/>
    </location>
</feature>
<feature type="region of interest" description="Disordered" evidence="4">
    <location>
        <begin position="34"/>
        <end position="67"/>
    </location>
</feature>
<feature type="region of interest" description="Interaction with NR5A2, PPARG and NR1H3" evidence="1">
    <location>
        <begin position="37"/>
        <end position="113"/>
    </location>
</feature>
<feature type="region of interest" description="Interaction with TBP and NR5A1" evidence="1">
    <location>
        <begin position="69"/>
        <end position="108"/>
    </location>
</feature>
<feature type="short sequence motif" description="IQ motif" evidence="1">
    <location>
        <begin position="81"/>
        <end position="88"/>
    </location>
</feature>
<feature type="compositionally biased region" description="Polar residues" evidence="4">
    <location>
        <begin position="48"/>
        <end position="58"/>
    </location>
</feature>
<feature type="modified residue" description="N-acetylalanine" evidence="2">
    <location>
        <position position="2"/>
    </location>
</feature>
<feature type="modified residue" description="Phosphoserine" evidence="2">
    <location>
        <position position="4"/>
    </location>
</feature>
<feature type="modified residue" description="N6-methyllysine" evidence="2">
    <location>
        <position position="25"/>
    </location>
</feature>
<feature type="sequence conflict" description="In Ref. 2; CAC32040." evidence="6" ref="2">
    <original>K</original>
    <variation>R</variation>
    <location>
        <position position="146"/>
    </location>
</feature>
<dbReference type="EMBL" id="AB030185">
    <property type="protein sequence ID" value="BAA92749.1"/>
    <property type="molecule type" value="mRNA"/>
</dbReference>
<dbReference type="EMBL" id="AJ309569">
    <property type="protein sequence ID" value="CAC32040.1"/>
    <property type="molecule type" value="mRNA"/>
</dbReference>
<dbReference type="EMBL" id="AK002345">
    <property type="protein sequence ID" value="BAB22026.1"/>
    <property type="molecule type" value="mRNA"/>
</dbReference>
<dbReference type="EMBL" id="AK003557">
    <property type="protein sequence ID" value="BAB22854.1"/>
    <property type="molecule type" value="mRNA"/>
</dbReference>
<dbReference type="EMBL" id="AK010191">
    <property type="protein sequence ID" value="BAB26758.1"/>
    <property type="molecule type" value="mRNA"/>
</dbReference>
<dbReference type="EMBL" id="BC023472">
    <property type="protein sequence ID" value="AAH23472.1"/>
    <property type="molecule type" value="mRNA"/>
</dbReference>
<dbReference type="CCDS" id="CCDS15780.1"/>
<dbReference type="RefSeq" id="NP_067494.1">
    <property type="nucleotide sequence ID" value="NM_021519.2"/>
</dbReference>
<dbReference type="BMRB" id="Q9JMG1"/>
<dbReference type="SMR" id="Q9JMG1"/>
<dbReference type="BioGRID" id="208490">
    <property type="interactions" value="2"/>
</dbReference>
<dbReference type="FunCoup" id="Q9JMG1">
    <property type="interactions" value="3207"/>
</dbReference>
<dbReference type="STRING" id="10090.ENSMUSP00000015236"/>
<dbReference type="GlyGen" id="Q9JMG1">
    <property type="glycosylation" value="1 site"/>
</dbReference>
<dbReference type="iPTMnet" id="Q9JMG1"/>
<dbReference type="PhosphoSitePlus" id="Q9JMG1"/>
<dbReference type="jPOST" id="Q9JMG1"/>
<dbReference type="PaxDb" id="10090-ENSMUSP00000015236"/>
<dbReference type="PeptideAtlas" id="Q9JMG1"/>
<dbReference type="ProteomicsDB" id="277796"/>
<dbReference type="Pumba" id="Q9JMG1"/>
<dbReference type="Antibodypedia" id="18815">
    <property type="antibodies" value="222 antibodies from 32 providers"/>
</dbReference>
<dbReference type="DNASU" id="59022"/>
<dbReference type="Ensembl" id="ENSMUST00000015236.4">
    <property type="protein sequence ID" value="ENSMUSP00000015236.4"/>
    <property type="gene ID" value="ENSMUSG00000015092.10"/>
</dbReference>
<dbReference type="GeneID" id="59022"/>
<dbReference type="KEGG" id="mmu:59022"/>
<dbReference type="UCSC" id="uc008isn.1">
    <property type="organism name" value="mouse"/>
</dbReference>
<dbReference type="AGR" id="MGI:1891227"/>
<dbReference type="CTD" id="8721"/>
<dbReference type="MGI" id="MGI:1891227">
    <property type="gene designation" value="Edf1"/>
</dbReference>
<dbReference type="VEuPathDB" id="HostDB:ENSMUSG00000015092"/>
<dbReference type="eggNOG" id="KOG3398">
    <property type="taxonomic scope" value="Eukaryota"/>
</dbReference>
<dbReference type="GeneTree" id="ENSGT00390000008519"/>
<dbReference type="HOGENOM" id="CLU_112609_0_1_1"/>
<dbReference type="InParanoid" id="Q9JMG1"/>
<dbReference type="OMA" id="GKNKSCK"/>
<dbReference type="OrthoDB" id="10253401at2759"/>
<dbReference type="PhylomeDB" id="Q9JMG1"/>
<dbReference type="TreeFam" id="TF300064"/>
<dbReference type="BioGRID-ORCS" id="59022">
    <property type="hits" value="9 hits in 78 CRISPR screens"/>
</dbReference>
<dbReference type="ChiTaRS" id="Edf1">
    <property type="organism name" value="mouse"/>
</dbReference>
<dbReference type="PRO" id="PR:Q9JMG1"/>
<dbReference type="Proteomes" id="UP000000589">
    <property type="component" value="Chromosome 2"/>
</dbReference>
<dbReference type="RNAct" id="Q9JMG1">
    <property type="molecule type" value="protein"/>
</dbReference>
<dbReference type="Bgee" id="ENSMUSG00000015092">
    <property type="expression patterns" value="Expressed in paneth cell and 273 other cell types or tissues"/>
</dbReference>
<dbReference type="GO" id="GO:0005829">
    <property type="term" value="C:cytosol"/>
    <property type="evidence" value="ECO:0007669"/>
    <property type="project" value="Ensembl"/>
</dbReference>
<dbReference type="GO" id="GO:0005730">
    <property type="term" value="C:nucleolus"/>
    <property type="evidence" value="ECO:0007669"/>
    <property type="project" value="Ensembl"/>
</dbReference>
<dbReference type="GO" id="GO:0005654">
    <property type="term" value="C:nucleoplasm"/>
    <property type="evidence" value="ECO:0007669"/>
    <property type="project" value="Ensembl"/>
</dbReference>
<dbReference type="GO" id="GO:0005516">
    <property type="term" value="F:calmodulin binding"/>
    <property type="evidence" value="ECO:0007669"/>
    <property type="project" value="UniProtKB-KW"/>
</dbReference>
<dbReference type="GO" id="GO:0003677">
    <property type="term" value="F:DNA binding"/>
    <property type="evidence" value="ECO:0007669"/>
    <property type="project" value="UniProtKB-KW"/>
</dbReference>
<dbReference type="GO" id="GO:0001094">
    <property type="term" value="F:TFIID-class transcription factor complex binding"/>
    <property type="evidence" value="ECO:0007669"/>
    <property type="project" value="Ensembl"/>
</dbReference>
<dbReference type="GO" id="GO:0003713">
    <property type="term" value="F:transcription coactivator activity"/>
    <property type="evidence" value="ECO:0007669"/>
    <property type="project" value="Ensembl"/>
</dbReference>
<dbReference type="GO" id="GO:0030154">
    <property type="term" value="P:cell differentiation"/>
    <property type="evidence" value="ECO:0007669"/>
    <property type="project" value="UniProtKB-KW"/>
</dbReference>
<dbReference type="CDD" id="cd00093">
    <property type="entry name" value="HTH_XRE"/>
    <property type="match status" value="1"/>
</dbReference>
<dbReference type="FunFam" id="1.10.260.40:FF:000015">
    <property type="entry name" value="Endothelial differentiation-related factor 1"/>
    <property type="match status" value="1"/>
</dbReference>
<dbReference type="Gene3D" id="1.10.260.40">
    <property type="entry name" value="lambda repressor-like DNA-binding domains"/>
    <property type="match status" value="1"/>
</dbReference>
<dbReference type="InterPro" id="IPR001387">
    <property type="entry name" value="Cro/C1-type_HTH"/>
</dbReference>
<dbReference type="InterPro" id="IPR010982">
    <property type="entry name" value="Lambda_DNA-bd_dom_sf"/>
</dbReference>
<dbReference type="InterPro" id="IPR013729">
    <property type="entry name" value="MBF1_N"/>
</dbReference>
<dbReference type="PANTHER" id="PTHR10245:SF15">
    <property type="entry name" value="ENDOTHELIAL DIFFERENTIATION-RELATED FACTOR 1"/>
    <property type="match status" value="1"/>
</dbReference>
<dbReference type="PANTHER" id="PTHR10245">
    <property type="entry name" value="ENDOTHELIAL DIFFERENTIATION-RELATED FACTOR 1 MULTIPROTEIN BRIDGING FACTOR 1"/>
    <property type="match status" value="1"/>
</dbReference>
<dbReference type="Pfam" id="PF01381">
    <property type="entry name" value="HTH_3"/>
    <property type="match status" value="1"/>
</dbReference>
<dbReference type="Pfam" id="PF08523">
    <property type="entry name" value="MBF1"/>
    <property type="match status" value="1"/>
</dbReference>
<dbReference type="SMART" id="SM00530">
    <property type="entry name" value="HTH_XRE"/>
    <property type="match status" value="1"/>
</dbReference>
<dbReference type="SUPFAM" id="SSF47413">
    <property type="entry name" value="lambda repressor-like DNA-binding domains"/>
    <property type="match status" value="1"/>
</dbReference>
<dbReference type="PROSITE" id="PS50943">
    <property type="entry name" value="HTH_CROC1"/>
    <property type="match status" value="1"/>
</dbReference>
<accession>Q9JMG1</accession>
<accession>Q99NE6</accession>
<name>EDF1_MOUSE</name>
<reference key="1">
    <citation type="journal article" date="2000" name="Biochem. Biophys. Res. Commun.">
        <title>Growth suppression of Escherichia coli by induction of expression of mammalian genes with transmembrane or ATPase domains.</title>
        <authorList>
            <person name="Inoue S."/>
            <person name="Sano H."/>
            <person name="Ohta M."/>
        </authorList>
    </citation>
    <scope>NUCLEOTIDE SEQUENCE [MRNA]</scope>
    <source>
        <tissue>Brain</tissue>
    </source>
</reference>
<reference key="2">
    <citation type="journal article" date="2001" name="Gene">
        <title>Cloning and characterization of murine EDF-1.</title>
        <authorList>
            <person name="De Benedictis L."/>
            <person name="Mariotti M."/>
            <person name="Dragoni I."/>
            <person name="Maier J.A.M."/>
        </authorList>
    </citation>
    <scope>NUCLEOTIDE SEQUENCE [MRNA]</scope>
    <scope>TISSUE SPECIFICITY</scope>
    <scope>DEVELOPMENTAL STAGE</scope>
</reference>
<reference key="3">
    <citation type="journal article" date="2005" name="Science">
        <title>The transcriptional landscape of the mammalian genome.</title>
        <authorList>
            <person name="Carninci P."/>
            <person name="Kasukawa T."/>
            <person name="Katayama S."/>
            <person name="Gough J."/>
            <person name="Frith M.C."/>
            <person name="Maeda N."/>
            <person name="Oyama R."/>
            <person name="Ravasi T."/>
            <person name="Lenhard B."/>
            <person name="Wells C."/>
            <person name="Kodzius R."/>
            <person name="Shimokawa K."/>
            <person name="Bajic V.B."/>
            <person name="Brenner S.E."/>
            <person name="Batalov S."/>
            <person name="Forrest A.R."/>
            <person name="Zavolan M."/>
            <person name="Davis M.J."/>
            <person name="Wilming L.G."/>
            <person name="Aidinis V."/>
            <person name="Allen J.E."/>
            <person name="Ambesi-Impiombato A."/>
            <person name="Apweiler R."/>
            <person name="Aturaliya R.N."/>
            <person name="Bailey T.L."/>
            <person name="Bansal M."/>
            <person name="Baxter L."/>
            <person name="Beisel K.W."/>
            <person name="Bersano T."/>
            <person name="Bono H."/>
            <person name="Chalk A.M."/>
            <person name="Chiu K.P."/>
            <person name="Choudhary V."/>
            <person name="Christoffels A."/>
            <person name="Clutterbuck D.R."/>
            <person name="Crowe M.L."/>
            <person name="Dalla E."/>
            <person name="Dalrymple B.P."/>
            <person name="de Bono B."/>
            <person name="Della Gatta G."/>
            <person name="di Bernardo D."/>
            <person name="Down T."/>
            <person name="Engstrom P."/>
            <person name="Fagiolini M."/>
            <person name="Faulkner G."/>
            <person name="Fletcher C.F."/>
            <person name="Fukushima T."/>
            <person name="Furuno M."/>
            <person name="Futaki S."/>
            <person name="Gariboldi M."/>
            <person name="Georgii-Hemming P."/>
            <person name="Gingeras T.R."/>
            <person name="Gojobori T."/>
            <person name="Green R.E."/>
            <person name="Gustincich S."/>
            <person name="Harbers M."/>
            <person name="Hayashi Y."/>
            <person name="Hensch T.K."/>
            <person name="Hirokawa N."/>
            <person name="Hill D."/>
            <person name="Huminiecki L."/>
            <person name="Iacono M."/>
            <person name="Ikeo K."/>
            <person name="Iwama A."/>
            <person name="Ishikawa T."/>
            <person name="Jakt M."/>
            <person name="Kanapin A."/>
            <person name="Katoh M."/>
            <person name="Kawasawa Y."/>
            <person name="Kelso J."/>
            <person name="Kitamura H."/>
            <person name="Kitano H."/>
            <person name="Kollias G."/>
            <person name="Krishnan S.P."/>
            <person name="Kruger A."/>
            <person name="Kummerfeld S.K."/>
            <person name="Kurochkin I.V."/>
            <person name="Lareau L.F."/>
            <person name="Lazarevic D."/>
            <person name="Lipovich L."/>
            <person name="Liu J."/>
            <person name="Liuni S."/>
            <person name="McWilliam S."/>
            <person name="Madan Babu M."/>
            <person name="Madera M."/>
            <person name="Marchionni L."/>
            <person name="Matsuda H."/>
            <person name="Matsuzawa S."/>
            <person name="Miki H."/>
            <person name="Mignone F."/>
            <person name="Miyake S."/>
            <person name="Morris K."/>
            <person name="Mottagui-Tabar S."/>
            <person name="Mulder N."/>
            <person name="Nakano N."/>
            <person name="Nakauchi H."/>
            <person name="Ng P."/>
            <person name="Nilsson R."/>
            <person name="Nishiguchi S."/>
            <person name="Nishikawa S."/>
            <person name="Nori F."/>
            <person name="Ohara O."/>
            <person name="Okazaki Y."/>
            <person name="Orlando V."/>
            <person name="Pang K.C."/>
            <person name="Pavan W.J."/>
            <person name="Pavesi G."/>
            <person name="Pesole G."/>
            <person name="Petrovsky N."/>
            <person name="Piazza S."/>
            <person name="Reed J."/>
            <person name="Reid J.F."/>
            <person name="Ring B.Z."/>
            <person name="Ringwald M."/>
            <person name="Rost B."/>
            <person name="Ruan Y."/>
            <person name="Salzberg S.L."/>
            <person name="Sandelin A."/>
            <person name="Schneider C."/>
            <person name="Schoenbach C."/>
            <person name="Sekiguchi K."/>
            <person name="Semple C.A."/>
            <person name="Seno S."/>
            <person name="Sessa L."/>
            <person name="Sheng Y."/>
            <person name="Shibata Y."/>
            <person name="Shimada H."/>
            <person name="Shimada K."/>
            <person name="Silva D."/>
            <person name="Sinclair B."/>
            <person name="Sperling S."/>
            <person name="Stupka E."/>
            <person name="Sugiura K."/>
            <person name="Sultana R."/>
            <person name="Takenaka Y."/>
            <person name="Taki K."/>
            <person name="Tammoja K."/>
            <person name="Tan S.L."/>
            <person name="Tang S."/>
            <person name="Taylor M.S."/>
            <person name="Tegner J."/>
            <person name="Teichmann S.A."/>
            <person name="Ueda H.R."/>
            <person name="van Nimwegen E."/>
            <person name="Verardo R."/>
            <person name="Wei C.L."/>
            <person name="Yagi K."/>
            <person name="Yamanishi H."/>
            <person name="Zabarovsky E."/>
            <person name="Zhu S."/>
            <person name="Zimmer A."/>
            <person name="Hide W."/>
            <person name="Bult C."/>
            <person name="Grimmond S.M."/>
            <person name="Teasdale R.D."/>
            <person name="Liu E.T."/>
            <person name="Brusic V."/>
            <person name="Quackenbush J."/>
            <person name="Wahlestedt C."/>
            <person name="Mattick J.S."/>
            <person name="Hume D.A."/>
            <person name="Kai C."/>
            <person name="Sasaki D."/>
            <person name="Tomaru Y."/>
            <person name="Fukuda S."/>
            <person name="Kanamori-Katayama M."/>
            <person name="Suzuki M."/>
            <person name="Aoki J."/>
            <person name="Arakawa T."/>
            <person name="Iida J."/>
            <person name="Imamura K."/>
            <person name="Itoh M."/>
            <person name="Kato T."/>
            <person name="Kawaji H."/>
            <person name="Kawagashira N."/>
            <person name="Kawashima T."/>
            <person name="Kojima M."/>
            <person name="Kondo S."/>
            <person name="Konno H."/>
            <person name="Nakano K."/>
            <person name="Ninomiya N."/>
            <person name="Nishio T."/>
            <person name="Okada M."/>
            <person name="Plessy C."/>
            <person name="Shibata K."/>
            <person name="Shiraki T."/>
            <person name="Suzuki S."/>
            <person name="Tagami M."/>
            <person name="Waki K."/>
            <person name="Watahiki A."/>
            <person name="Okamura-Oho Y."/>
            <person name="Suzuki H."/>
            <person name="Kawai J."/>
            <person name="Hayashizaki Y."/>
        </authorList>
    </citation>
    <scope>NUCLEOTIDE SEQUENCE [LARGE SCALE MRNA]</scope>
    <source>
        <strain>C57BL/6J</strain>
        <tissue>Embryo</tissue>
        <tissue>Kidney</tissue>
        <tissue>Tongue</tissue>
    </source>
</reference>
<reference key="4">
    <citation type="journal article" date="2004" name="Genome Res.">
        <title>The status, quality, and expansion of the NIH full-length cDNA project: the Mammalian Gene Collection (MGC).</title>
        <authorList>
            <consortium name="The MGC Project Team"/>
        </authorList>
    </citation>
    <scope>NUCLEOTIDE SEQUENCE [LARGE SCALE MRNA]</scope>
    <source>
        <strain>FVB/N</strain>
        <tissue>Mammary tumor</tissue>
    </source>
</reference>
<reference key="5">
    <citation type="journal article" date="2006" name="Mol. Cell. Proteomics">
        <title>Comprehensive identification of phosphorylation sites in postsynaptic density preparations.</title>
        <authorList>
            <person name="Trinidad J.C."/>
            <person name="Specht C.G."/>
            <person name="Thalhammer A."/>
            <person name="Schoepfer R."/>
            <person name="Burlingame A.L."/>
        </authorList>
    </citation>
    <scope>IDENTIFICATION BY MASS SPECTROMETRY [LARGE SCALE ANALYSIS]</scope>
    <source>
        <tissue>Brain</tissue>
    </source>
</reference>
<reference key="6">
    <citation type="journal article" date="2010" name="Cell">
        <title>A tissue-specific atlas of mouse protein phosphorylation and expression.</title>
        <authorList>
            <person name="Huttlin E.L."/>
            <person name="Jedrychowski M.P."/>
            <person name="Elias J.E."/>
            <person name="Goswami T."/>
            <person name="Rad R."/>
            <person name="Beausoleil S.A."/>
            <person name="Villen J."/>
            <person name="Haas W."/>
            <person name="Sowa M.E."/>
            <person name="Gygi S.P."/>
        </authorList>
    </citation>
    <scope>IDENTIFICATION BY MASS SPECTROMETRY [LARGE SCALE ANALYSIS]</scope>
    <source>
        <tissue>Brown adipose tissue</tissue>
        <tissue>Kidney</tissue>
        <tissue>Liver</tissue>
        <tissue>Lung</tissue>
        <tissue>Pancreas</tissue>
        <tissue>Spleen</tissue>
        <tissue>Testis</tissue>
    </source>
</reference>
<sequence>MAESDWDTVTVLRKKGPTAAQAKSKQAILAAQRRGEDVETSKKWAAGQNKQHSITKNTAKLDRETEELHHDRVTLEVGKVIQRGRQSKGLTQKDLATKINEKPQVIADYESGRAIPNNQVLGKIERAIGLKLRGKDIGKPIEKGPKAK</sequence>
<proteinExistence type="evidence at protein level"/>
<organism>
    <name type="scientific">Mus musculus</name>
    <name type="common">Mouse</name>
    <dbReference type="NCBI Taxonomy" id="10090"/>
    <lineage>
        <taxon>Eukaryota</taxon>
        <taxon>Metazoa</taxon>
        <taxon>Chordata</taxon>
        <taxon>Craniata</taxon>
        <taxon>Vertebrata</taxon>
        <taxon>Euteleostomi</taxon>
        <taxon>Mammalia</taxon>
        <taxon>Eutheria</taxon>
        <taxon>Euarchontoglires</taxon>
        <taxon>Glires</taxon>
        <taxon>Rodentia</taxon>
        <taxon>Myomorpha</taxon>
        <taxon>Muroidea</taxon>
        <taxon>Muridae</taxon>
        <taxon>Murinae</taxon>
        <taxon>Mus</taxon>
        <taxon>Mus</taxon>
    </lineage>
</organism>